<feature type="chain" id="PRO_0000135017" description="Nicotinamide/nicotinic acid mononucleotide adenylyltransferase 3">
    <location>
        <begin position="1"/>
        <end position="245"/>
    </location>
</feature>
<feature type="binding site" evidence="2">
    <location>
        <position position="14"/>
    </location>
    <ligand>
        <name>NAD(+)</name>
        <dbReference type="ChEBI" id="CHEBI:57540"/>
    </ligand>
</feature>
<feature type="binding site" evidence="2">
    <location>
        <position position="15"/>
    </location>
    <ligand>
        <name>NAD(+)</name>
        <dbReference type="ChEBI" id="CHEBI:57540"/>
    </ligand>
</feature>
<feature type="binding site" description="in other chain" evidence="2">
    <location>
        <position position="22"/>
    </location>
    <ligand>
        <name>ATP</name>
        <dbReference type="ChEBI" id="CHEBI:30616"/>
        <note>ligand shared between dimeric partners</note>
    </ligand>
</feature>
<feature type="binding site" description="in other chain" evidence="2">
    <location>
        <position position="56"/>
    </location>
    <ligand>
        <name>ATP</name>
        <dbReference type="ChEBI" id="CHEBI:30616"/>
        <note>ligand shared between dimeric partners</note>
    </ligand>
</feature>
<feature type="binding site" evidence="2">
    <location>
        <position position="90"/>
    </location>
    <ligand>
        <name>NAD(+)</name>
        <dbReference type="ChEBI" id="CHEBI:57540"/>
    </ligand>
</feature>
<feature type="binding site" evidence="2">
    <location>
        <position position="93"/>
    </location>
    <ligand>
        <name>NAD(+)</name>
        <dbReference type="ChEBI" id="CHEBI:57540"/>
    </ligand>
</feature>
<feature type="binding site" evidence="2">
    <location>
        <position position="134"/>
    </location>
    <ligand>
        <name>NAD(+)</name>
        <dbReference type="ChEBI" id="CHEBI:57540"/>
    </ligand>
</feature>
<feature type="binding site" evidence="2">
    <location>
        <position position="136"/>
    </location>
    <ligand>
        <name>NAD(+)</name>
        <dbReference type="ChEBI" id="CHEBI:57540"/>
    </ligand>
</feature>
<feature type="binding site" evidence="2">
    <location>
        <position position="139"/>
    </location>
    <ligand>
        <name>ATP</name>
        <dbReference type="ChEBI" id="CHEBI:30616"/>
        <note>ligand shared between dimeric partners</note>
    </ligand>
</feature>
<feature type="binding site" evidence="2">
    <location>
        <position position="146"/>
    </location>
    <ligand>
        <name>NAD(+)</name>
        <dbReference type="ChEBI" id="CHEBI:57540"/>
    </ligand>
</feature>
<feature type="binding site" evidence="2">
    <location>
        <position position="147"/>
    </location>
    <ligand>
        <name>NAD(+)</name>
        <dbReference type="ChEBI" id="CHEBI:57540"/>
    </ligand>
</feature>
<feature type="binding site" evidence="2">
    <location>
        <position position="166"/>
    </location>
    <ligand>
        <name>NAD(+)</name>
        <dbReference type="ChEBI" id="CHEBI:57540"/>
    </ligand>
</feature>
<feature type="binding site" evidence="2">
    <location>
        <position position="197"/>
    </location>
    <ligand>
        <name>NAD(+)</name>
        <dbReference type="ChEBI" id="CHEBI:57540"/>
    </ligand>
</feature>
<feature type="binding site" description="in other chain" evidence="2">
    <location>
        <begin position="202"/>
        <end position="205"/>
    </location>
    <ligand>
        <name>ATP</name>
        <dbReference type="ChEBI" id="CHEBI:30616"/>
        <note>ligand shared between dimeric partners</note>
    </ligand>
</feature>
<feature type="strand" evidence="7">
    <location>
        <begin position="5"/>
        <end position="13"/>
    </location>
</feature>
<feature type="helix" evidence="7">
    <location>
        <begin position="20"/>
        <end position="36"/>
    </location>
</feature>
<feature type="strand" evidence="7">
    <location>
        <begin position="37"/>
        <end position="48"/>
    </location>
</feature>
<feature type="turn" evidence="7">
    <location>
        <begin position="51"/>
        <end position="53"/>
    </location>
</feature>
<feature type="helix" evidence="7">
    <location>
        <begin position="61"/>
        <end position="71"/>
    </location>
</feature>
<feature type="helix" evidence="7">
    <location>
        <begin position="72"/>
        <end position="74"/>
    </location>
</feature>
<feature type="strand" evidence="7">
    <location>
        <begin position="76"/>
        <end position="80"/>
    </location>
</feature>
<feature type="helix" evidence="7">
    <location>
        <begin position="83"/>
        <end position="86"/>
    </location>
</feature>
<feature type="strand" evidence="7">
    <location>
        <begin position="87"/>
        <end position="89"/>
    </location>
</feature>
<feature type="helix" evidence="7">
    <location>
        <begin position="93"/>
        <end position="106"/>
    </location>
</feature>
<feature type="strand" evidence="7">
    <location>
        <begin position="128"/>
        <end position="134"/>
    </location>
</feature>
<feature type="helix" evidence="7">
    <location>
        <begin position="135"/>
        <end position="140"/>
    </location>
</feature>
<feature type="helix" evidence="7">
    <location>
        <begin position="144"/>
        <end position="146"/>
    </location>
</feature>
<feature type="helix" evidence="7">
    <location>
        <begin position="150"/>
        <end position="158"/>
    </location>
</feature>
<feature type="strand" evidence="7">
    <location>
        <begin position="161"/>
        <end position="164"/>
    </location>
</feature>
<feature type="helix" evidence="7">
    <location>
        <begin position="171"/>
        <end position="177"/>
    </location>
</feature>
<feature type="helix" evidence="7">
    <location>
        <begin position="179"/>
        <end position="183"/>
    </location>
</feature>
<feature type="helix" evidence="7">
    <location>
        <begin position="185"/>
        <end position="187"/>
    </location>
</feature>
<feature type="strand" evidence="7">
    <location>
        <begin position="188"/>
        <end position="191"/>
    </location>
</feature>
<feature type="helix" evidence="7">
    <location>
        <begin position="201"/>
        <end position="209"/>
    </location>
</feature>
<feature type="helix" evidence="7">
    <location>
        <begin position="220"/>
        <end position="229"/>
    </location>
</feature>
<feature type="turn" evidence="7">
    <location>
        <begin position="230"/>
        <end position="232"/>
    </location>
</feature>
<organism>
    <name type="scientific">Mus musculus</name>
    <name type="common">Mouse</name>
    <dbReference type="NCBI Taxonomy" id="10090"/>
    <lineage>
        <taxon>Eukaryota</taxon>
        <taxon>Metazoa</taxon>
        <taxon>Chordata</taxon>
        <taxon>Craniata</taxon>
        <taxon>Vertebrata</taxon>
        <taxon>Euteleostomi</taxon>
        <taxon>Mammalia</taxon>
        <taxon>Eutheria</taxon>
        <taxon>Euarchontoglires</taxon>
        <taxon>Glires</taxon>
        <taxon>Rodentia</taxon>
        <taxon>Myomorpha</taxon>
        <taxon>Muroidea</taxon>
        <taxon>Muridae</taxon>
        <taxon>Murinae</taxon>
        <taxon>Mus</taxon>
        <taxon>Mus</taxon>
    </lineage>
</organism>
<accession>Q99JR6</accession>
<accession>Q58E37</accession>
<protein>
    <recommendedName>
        <fullName evidence="5">Nicotinamide/nicotinic acid mononucleotide adenylyltransferase 3</fullName>
        <shortName>NMN/NaMN adenylyltransferase 3</shortName>
        <ecNumber evidence="2">2.7.7.1</ecNumber>
        <ecNumber evidence="2">2.7.7.18</ecNumber>
    </recommendedName>
    <alternativeName>
        <fullName>Nicotinamide-nucleotide adenylyltransferase 3</fullName>
        <shortName>NMN adenylyltransferase 3</shortName>
    </alternativeName>
    <alternativeName>
        <fullName>Nicotinate-nucleotide adenylyltransferase 3</fullName>
        <shortName>NaMN adenylyltransferase 3</shortName>
    </alternativeName>
</protein>
<proteinExistence type="evidence at protein level"/>
<dbReference type="EC" id="2.7.7.1" evidence="2"/>
<dbReference type="EC" id="2.7.7.18" evidence="2"/>
<dbReference type="EMBL" id="BC005737">
    <property type="protein sequence ID" value="AAH05737.1"/>
    <property type="molecule type" value="mRNA"/>
</dbReference>
<dbReference type="EMBL" id="BC092086">
    <property type="protein sequence ID" value="AAH92086.1"/>
    <property type="molecule type" value="mRNA"/>
</dbReference>
<dbReference type="CCDS" id="CCDS23423.1"/>
<dbReference type="RefSeq" id="NP_653116.1">
    <property type="nucleotide sequence ID" value="NM_144533.3"/>
</dbReference>
<dbReference type="RefSeq" id="XP_006511565.1">
    <property type="nucleotide sequence ID" value="XM_006511502.4"/>
</dbReference>
<dbReference type="RefSeq" id="XP_006511566.1">
    <property type="nucleotide sequence ID" value="XM_006511503.4"/>
</dbReference>
<dbReference type="RefSeq" id="XP_006511567.1">
    <property type="nucleotide sequence ID" value="XM_006511504.4"/>
</dbReference>
<dbReference type="RefSeq" id="XP_011241128.1">
    <property type="nucleotide sequence ID" value="XM_011242826.3"/>
</dbReference>
<dbReference type="RefSeq" id="XP_011241129.1">
    <property type="nucleotide sequence ID" value="XM_011242827.3"/>
</dbReference>
<dbReference type="RefSeq" id="XP_030100520.1">
    <property type="nucleotide sequence ID" value="XM_030244660.2"/>
</dbReference>
<dbReference type="PDB" id="5Z9R">
    <property type="method" value="X-ray"/>
    <property type="resolution" value="2.00 A"/>
    <property type="chains" value="A/B=1-245"/>
</dbReference>
<dbReference type="PDBsum" id="5Z9R"/>
<dbReference type="SMR" id="Q99JR6"/>
<dbReference type="BioGRID" id="216475">
    <property type="interactions" value="4"/>
</dbReference>
<dbReference type="FunCoup" id="Q99JR6">
    <property type="interactions" value="577"/>
</dbReference>
<dbReference type="STRING" id="10090.ENSMUSP00000108557"/>
<dbReference type="iPTMnet" id="Q99JR6"/>
<dbReference type="PhosphoSitePlus" id="Q99JR6"/>
<dbReference type="PaxDb" id="10090-ENSMUSP00000108557"/>
<dbReference type="PeptideAtlas" id="Q99JR6"/>
<dbReference type="ProteomicsDB" id="293866"/>
<dbReference type="Pumba" id="Q99JR6"/>
<dbReference type="Antibodypedia" id="33465">
    <property type="antibodies" value="178 antibodies from 27 providers"/>
</dbReference>
<dbReference type="DNASU" id="74080"/>
<dbReference type="Ensembl" id="ENSMUST00000112935.8">
    <property type="protein sequence ID" value="ENSMUSP00000108557.3"/>
    <property type="gene ID" value="ENSMUSG00000032456.14"/>
</dbReference>
<dbReference type="GeneID" id="74080"/>
<dbReference type="KEGG" id="mmu:74080"/>
<dbReference type="UCSC" id="uc009rdh.1">
    <property type="organism name" value="mouse"/>
</dbReference>
<dbReference type="AGR" id="MGI:1921330"/>
<dbReference type="CTD" id="349565"/>
<dbReference type="MGI" id="MGI:1921330">
    <property type="gene designation" value="Nmnat3"/>
</dbReference>
<dbReference type="VEuPathDB" id="HostDB:ENSMUSG00000032456"/>
<dbReference type="eggNOG" id="KOG3199">
    <property type="taxonomic scope" value="Eukaryota"/>
</dbReference>
<dbReference type="GeneTree" id="ENSGT00950000183179"/>
<dbReference type="HOGENOM" id="CLU_033366_3_1_1"/>
<dbReference type="InParanoid" id="Q99JR6"/>
<dbReference type="OMA" id="FIVERPA"/>
<dbReference type="OrthoDB" id="422187at2759"/>
<dbReference type="PhylomeDB" id="Q99JR6"/>
<dbReference type="TreeFam" id="TF315035"/>
<dbReference type="BRENDA" id="2.7.7.1">
    <property type="organism ID" value="3474"/>
</dbReference>
<dbReference type="BRENDA" id="2.7.7.18">
    <property type="organism ID" value="3474"/>
</dbReference>
<dbReference type="Reactome" id="R-MMU-196807">
    <property type="pathway name" value="Nicotinate metabolism"/>
</dbReference>
<dbReference type="UniPathway" id="UPA00253">
    <property type="reaction ID" value="UER00332"/>
</dbReference>
<dbReference type="UniPathway" id="UPA00253">
    <property type="reaction ID" value="UER00600"/>
</dbReference>
<dbReference type="BioGRID-ORCS" id="74080">
    <property type="hits" value="2 hits in 77 CRISPR screens"/>
</dbReference>
<dbReference type="ChiTaRS" id="Nmnat3">
    <property type="organism name" value="mouse"/>
</dbReference>
<dbReference type="PRO" id="PR:Q99JR6"/>
<dbReference type="Proteomes" id="UP000000589">
    <property type="component" value="Chromosome 9"/>
</dbReference>
<dbReference type="RNAct" id="Q99JR6">
    <property type="molecule type" value="protein"/>
</dbReference>
<dbReference type="Bgee" id="ENSMUSG00000032456">
    <property type="expression patterns" value="Expressed in spermatocyte and 175 other cell types or tissues"/>
</dbReference>
<dbReference type="ExpressionAtlas" id="Q99JR6">
    <property type="expression patterns" value="baseline and differential"/>
</dbReference>
<dbReference type="GO" id="GO:0030424">
    <property type="term" value="C:axon"/>
    <property type="evidence" value="ECO:0007669"/>
    <property type="project" value="Ensembl"/>
</dbReference>
<dbReference type="GO" id="GO:0005759">
    <property type="term" value="C:mitochondrial matrix"/>
    <property type="evidence" value="ECO:0000314"/>
    <property type="project" value="MGI"/>
</dbReference>
<dbReference type="GO" id="GO:0005739">
    <property type="term" value="C:mitochondrion"/>
    <property type="evidence" value="ECO:0000314"/>
    <property type="project" value="MGI"/>
</dbReference>
<dbReference type="GO" id="GO:0043025">
    <property type="term" value="C:neuronal cell body"/>
    <property type="evidence" value="ECO:0007669"/>
    <property type="project" value="Ensembl"/>
</dbReference>
<dbReference type="GO" id="GO:0005524">
    <property type="term" value="F:ATP binding"/>
    <property type="evidence" value="ECO:0007669"/>
    <property type="project" value="UniProtKB-KW"/>
</dbReference>
<dbReference type="GO" id="GO:0000309">
    <property type="term" value="F:nicotinamide-nucleotide adenylyltransferase activity"/>
    <property type="evidence" value="ECO:0000314"/>
    <property type="project" value="MGI"/>
</dbReference>
<dbReference type="GO" id="GO:0004515">
    <property type="term" value="F:nicotinate-nucleotide adenylyltransferase activity"/>
    <property type="evidence" value="ECO:0007669"/>
    <property type="project" value="UniProtKB-EC"/>
</dbReference>
<dbReference type="GO" id="GO:0044183">
    <property type="term" value="F:protein folding chaperone"/>
    <property type="evidence" value="ECO:0007669"/>
    <property type="project" value="Ensembl"/>
</dbReference>
<dbReference type="GO" id="GO:0061077">
    <property type="term" value="P:chaperone-mediated protein folding"/>
    <property type="evidence" value="ECO:0007669"/>
    <property type="project" value="Ensembl"/>
</dbReference>
<dbReference type="GO" id="GO:0009435">
    <property type="term" value="P:NAD biosynthetic process"/>
    <property type="evidence" value="ECO:0000314"/>
    <property type="project" value="MGI"/>
</dbReference>
<dbReference type="GO" id="GO:0034355">
    <property type="term" value="P:NAD biosynthetic process via the salvage pathway"/>
    <property type="evidence" value="ECO:0000315"/>
    <property type="project" value="MGI"/>
</dbReference>
<dbReference type="GO" id="GO:0006769">
    <property type="term" value="P:nicotinamide metabolic process"/>
    <property type="evidence" value="ECO:0000315"/>
    <property type="project" value="MGI"/>
</dbReference>
<dbReference type="GO" id="GO:0034612">
    <property type="term" value="P:response to tumor necrosis factor"/>
    <property type="evidence" value="ECO:0007669"/>
    <property type="project" value="Ensembl"/>
</dbReference>
<dbReference type="GO" id="GO:0009611">
    <property type="term" value="P:response to wounding"/>
    <property type="evidence" value="ECO:0000314"/>
    <property type="project" value="MGI"/>
</dbReference>
<dbReference type="CDD" id="cd09286">
    <property type="entry name" value="NMNAT_Eukarya"/>
    <property type="match status" value="1"/>
</dbReference>
<dbReference type="FunFam" id="3.40.50.620:FF:000221">
    <property type="entry name" value="Nicotinamide/nicotinic acid mononucleotide adenylyltransferase 3"/>
    <property type="match status" value="1"/>
</dbReference>
<dbReference type="Gene3D" id="3.40.50.620">
    <property type="entry name" value="HUPs"/>
    <property type="match status" value="1"/>
</dbReference>
<dbReference type="InterPro" id="IPR004821">
    <property type="entry name" value="Cyt_trans-like"/>
</dbReference>
<dbReference type="InterPro" id="IPR051182">
    <property type="entry name" value="Euk_NMN_adenylyltrnsfrase"/>
</dbReference>
<dbReference type="InterPro" id="IPR005248">
    <property type="entry name" value="NadD/NMNAT"/>
</dbReference>
<dbReference type="InterPro" id="IPR045094">
    <property type="entry name" value="NMNAT_euk"/>
</dbReference>
<dbReference type="InterPro" id="IPR014729">
    <property type="entry name" value="Rossmann-like_a/b/a_fold"/>
</dbReference>
<dbReference type="NCBIfam" id="TIGR00482">
    <property type="entry name" value="nicotinate (nicotinamide) nucleotide adenylyltransferase"/>
    <property type="match status" value="1"/>
</dbReference>
<dbReference type="PANTHER" id="PTHR12039">
    <property type="entry name" value="NICOTINAMIDE MONONUCLEOTIDE ADENYLYLTRANSFERASE"/>
    <property type="match status" value="1"/>
</dbReference>
<dbReference type="PANTHER" id="PTHR12039:SF7">
    <property type="entry name" value="NICOTINAMIDE_NICOTINIC ACID MONONUCLEOTIDE ADENYLYLTRANSFERASE 3"/>
    <property type="match status" value="1"/>
</dbReference>
<dbReference type="Pfam" id="PF01467">
    <property type="entry name" value="CTP_transf_like"/>
    <property type="match status" value="1"/>
</dbReference>
<dbReference type="SUPFAM" id="SSF52374">
    <property type="entry name" value="Nucleotidylyl transferase"/>
    <property type="match status" value="1"/>
</dbReference>
<gene>
    <name evidence="6" type="primary">Nmnat3</name>
</gene>
<reference key="1">
    <citation type="journal article" date="2004" name="Genome Res.">
        <title>The status, quality, and expansion of the NIH full-length cDNA project: the Mammalian Gene Collection (MGC).</title>
        <authorList>
            <consortium name="The MGC Project Team"/>
        </authorList>
    </citation>
    <scope>NUCLEOTIDE SEQUENCE [LARGE SCALE MRNA]</scope>
    <source>
        <strain>FVB/N</strain>
        <tissue>Kidney</tissue>
    </source>
</reference>
<reference key="2">
    <citation type="journal article" date="2006" name="J. Neurosci.">
        <title>Stimulation of nicotinamide adenine dinucleotide biosynthetic pathways delays axonal degeneration after axotomy.</title>
        <authorList>
            <person name="Sasaki Y."/>
            <person name="Araki T."/>
            <person name="Milbrandt J."/>
        </authorList>
    </citation>
    <scope>FUNCTION</scope>
    <scope>SUBCELLULAR LOCATION</scope>
    <scope>DEVELOPMENTAL STAGE</scope>
</reference>
<reference key="3">
    <citation type="journal article" date="2010" name="Cell">
        <title>A tissue-specific atlas of mouse protein phosphorylation and expression.</title>
        <authorList>
            <person name="Huttlin E.L."/>
            <person name="Jedrychowski M.P."/>
            <person name="Elias J.E."/>
            <person name="Goswami T."/>
            <person name="Rad R."/>
            <person name="Beausoleil S.A."/>
            <person name="Villen J."/>
            <person name="Haas W."/>
            <person name="Sowa M.E."/>
            <person name="Gygi S.P."/>
        </authorList>
    </citation>
    <scope>IDENTIFICATION BY MASS SPECTROMETRY [LARGE SCALE ANALYSIS]</scope>
    <source>
        <tissue>Brown adipose tissue</tissue>
        <tissue>Heart</tissue>
        <tissue>Kidney</tissue>
        <tissue>Spleen</tissue>
        <tissue>Testis</tissue>
    </source>
</reference>
<reference key="4">
    <citation type="journal article" date="2012" name="Curr. Biol.">
        <title>A novel Drosophila model of nerve injury reveals an essential role of Nmnat in maintaining axonal integrity.</title>
        <authorList>
            <person name="Fang Y."/>
            <person name="Soares L."/>
            <person name="Teng X."/>
            <person name="Geary M."/>
            <person name="Bonini N.M."/>
        </authorList>
    </citation>
    <scope>FUNCTION</scope>
</reference>
<keyword id="KW-0002">3D-structure</keyword>
<keyword id="KW-0067">ATP-binding</keyword>
<keyword id="KW-0496">Mitochondrion</keyword>
<keyword id="KW-0520">NAD</keyword>
<keyword id="KW-0547">Nucleotide-binding</keyword>
<keyword id="KW-0548">Nucleotidyltransferase</keyword>
<keyword id="KW-0662">Pyridine nucleotide biosynthesis</keyword>
<keyword id="KW-1185">Reference proteome</keyword>
<keyword id="KW-0808">Transferase</keyword>
<comment type="function">
    <text evidence="2 3 4">Catalyzes the formation of NAD(+) from nicotinamide mononucleotide (NMN) and ATP. Can also use the deamidated form; nicotinic acid mononucleotide (NaMN) as substrate with the same efficiency. Can use triazofurin monophosphate (TrMP) as substrate. Can also use GTP and ITP as nucleotide donors. Also catalyzes the reverse reaction, i.e. the pyrophosphorolytic cleavage of NAD(+). For the pyrophosphorolytic activity, can use NAD(+), NADH, NaAD, nicotinic acid adenine dinucleotide phosphate (NHD), nicotinamide guanine dinucleotide (NGD) as substrates. Fails to cleave phosphorylated dinucleotides NADP(+), NADPH and NaADP(+) (By similarity). Protects against axonal degeneration following injury (PubMed:16914673). May be involved in the maintenance of axonal integrity (PubMed:22425156). Also functions as a stress-response chaperone protein that prevents toxic aggregation of proteins; this function may be independent of its NAD(+) synthesis activity (By similarity).</text>
</comment>
<comment type="catalytic activity">
    <reaction evidence="2">
        <text>beta-nicotinamide D-ribonucleotide + ATP + H(+) = diphosphate + NAD(+)</text>
        <dbReference type="Rhea" id="RHEA:21360"/>
        <dbReference type="ChEBI" id="CHEBI:14649"/>
        <dbReference type="ChEBI" id="CHEBI:15378"/>
        <dbReference type="ChEBI" id="CHEBI:30616"/>
        <dbReference type="ChEBI" id="CHEBI:33019"/>
        <dbReference type="ChEBI" id="CHEBI:57540"/>
        <dbReference type="EC" id="2.7.7.1"/>
    </reaction>
    <physiologicalReaction direction="left-to-right" evidence="2">
        <dbReference type="Rhea" id="RHEA:21361"/>
    </physiologicalReaction>
    <physiologicalReaction direction="right-to-left" evidence="2">
        <dbReference type="Rhea" id="RHEA:21362"/>
    </physiologicalReaction>
</comment>
<comment type="catalytic activity">
    <reaction evidence="2">
        <text>nicotinate beta-D-ribonucleotide + ATP + H(+) = deamido-NAD(+) + diphosphate</text>
        <dbReference type="Rhea" id="RHEA:22860"/>
        <dbReference type="ChEBI" id="CHEBI:15378"/>
        <dbReference type="ChEBI" id="CHEBI:30616"/>
        <dbReference type="ChEBI" id="CHEBI:33019"/>
        <dbReference type="ChEBI" id="CHEBI:57502"/>
        <dbReference type="ChEBI" id="CHEBI:58437"/>
        <dbReference type="EC" id="2.7.7.18"/>
    </reaction>
    <physiologicalReaction direction="left-to-right" evidence="2">
        <dbReference type="Rhea" id="RHEA:22861"/>
    </physiologicalReaction>
    <physiologicalReaction direction="right-to-left" evidence="2">
        <dbReference type="Rhea" id="RHEA:22862"/>
    </physiologicalReaction>
</comment>
<comment type="cofactor">
    <cofactor evidence="1">
        <name>Mg(2+)</name>
        <dbReference type="ChEBI" id="CHEBI:18420"/>
    </cofactor>
    <text evidence="1">Divalent metal cations. Mg(2+) confers the highest activity.</text>
</comment>
<comment type="activity regulation">
    <text evidence="1">Activity is strongly inhibited by galotannin. Inhibited by P1-(adenosine-5')-P4-(nicotinic-acid-riboside-5')-tetraphosphate (Nap4AD) (By similarity).</text>
</comment>
<comment type="pathway">
    <text>Cofactor biosynthesis; NAD(+) biosynthesis; NAD(+) from nicotinamide D-ribonucleotide: step 1/1.</text>
</comment>
<comment type="pathway">
    <text>Cofactor biosynthesis; NAD(+) biosynthesis; deamido-NAD(+) from nicotinate D-ribonucleotide: step 1/1.</text>
</comment>
<comment type="subunit">
    <text evidence="1">Homotetramer.</text>
</comment>
<comment type="subcellular location">
    <subcellularLocation>
        <location evidence="3">Mitochondrion</location>
    </subcellularLocation>
</comment>
<comment type="developmental stage">
    <text evidence="3">Expressed throughout development and in adulthood.</text>
</comment>
<comment type="similarity">
    <text evidence="5">Belongs to the eukaryotic NMN adenylyltransferase family.</text>
</comment>
<sequence>MKNRIPVVLLACGSFNPITNMHLRLFEVARDHLHQTGRYQVIEGIISPVNDSYGKKDLVASHHRVAMARLALQTSDWIRVDPWESEQAQWMETVKVLRHHHRELLRSSAQMDGPDPSKTPSASAALPELKLLCGADVLKTFQTPNLWKDTHIQEIVEKFGLVCVSRSGHDPERYISDSPILQQFQHNIHLAREPVLNEISATYVRKALGQGQSVKYLLPEAVITYIRDQGLYINDGSWKGKGKTG</sequence>
<name>NMNA3_MOUSE</name>
<evidence type="ECO:0000250" key="1"/>
<evidence type="ECO:0000250" key="2">
    <source>
        <dbReference type="UniProtKB" id="Q96T66"/>
    </source>
</evidence>
<evidence type="ECO:0000269" key="3">
    <source>
    </source>
</evidence>
<evidence type="ECO:0000269" key="4">
    <source>
    </source>
</evidence>
<evidence type="ECO:0000305" key="5"/>
<evidence type="ECO:0000312" key="6">
    <source>
        <dbReference type="MGI" id="MGI:1921330"/>
    </source>
</evidence>
<evidence type="ECO:0007829" key="7">
    <source>
        <dbReference type="PDB" id="5Z9R"/>
    </source>
</evidence>